<name>DDL_PROM2</name>
<comment type="function">
    <text evidence="2">Cell wall formation.</text>
</comment>
<comment type="catalytic activity">
    <reaction evidence="2">
        <text>2 D-alanine + ATP = D-alanyl-D-alanine + ADP + phosphate + H(+)</text>
        <dbReference type="Rhea" id="RHEA:11224"/>
        <dbReference type="ChEBI" id="CHEBI:15378"/>
        <dbReference type="ChEBI" id="CHEBI:30616"/>
        <dbReference type="ChEBI" id="CHEBI:43474"/>
        <dbReference type="ChEBI" id="CHEBI:57416"/>
        <dbReference type="ChEBI" id="CHEBI:57822"/>
        <dbReference type="ChEBI" id="CHEBI:456216"/>
        <dbReference type="EC" id="6.3.2.4"/>
    </reaction>
</comment>
<comment type="cofactor">
    <cofactor evidence="1">
        <name>Mg(2+)</name>
        <dbReference type="ChEBI" id="CHEBI:18420"/>
    </cofactor>
    <cofactor evidence="1">
        <name>Mn(2+)</name>
        <dbReference type="ChEBI" id="CHEBI:29035"/>
    </cofactor>
    <text evidence="1">Binds 2 magnesium or manganese ions per subunit.</text>
</comment>
<comment type="pathway">
    <text evidence="2">Cell wall biogenesis; peptidoglycan biosynthesis.</text>
</comment>
<comment type="subcellular location">
    <subcellularLocation>
        <location evidence="2">Cytoplasm</location>
    </subcellularLocation>
</comment>
<comment type="similarity">
    <text evidence="2">Belongs to the D-alanine--D-alanine ligase family.</text>
</comment>
<evidence type="ECO:0000250" key="1"/>
<evidence type="ECO:0000255" key="2">
    <source>
        <dbReference type="HAMAP-Rule" id="MF_00047"/>
    </source>
</evidence>
<organism>
    <name type="scientific">Prochlorococcus marinus (strain MIT 9215)</name>
    <dbReference type="NCBI Taxonomy" id="93060"/>
    <lineage>
        <taxon>Bacteria</taxon>
        <taxon>Bacillati</taxon>
        <taxon>Cyanobacteriota</taxon>
        <taxon>Cyanophyceae</taxon>
        <taxon>Synechococcales</taxon>
        <taxon>Prochlorococcaceae</taxon>
        <taxon>Prochlorococcus</taxon>
    </lineage>
</organism>
<gene>
    <name evidence="2" type="primary">ddl</name>
    <name type="ordered locus">P9215_15351</name>
</gene>
<feature type="chain" id="PRO_1000057328" description="D-alanine--D-alanine ligase">
    <location>
        <begin position="1"/>
        <end position="355"/>
    </location>
</feature>
<feature type="domain" description="ATP-grasp" evidence="2">
    <location>
        <begin position="143"/>
        <end position="350"/>
    </location>
</feature>
<feature type="binding site" evidence="2">
    <location>
        <begin position="178"/>
        <end position="233"/>
    </location>
    <ligand>
        <name>ATP</name>
        <dbReference type="ChEBI" id="CHEBI:30616"/>
    </ligand>
</feature>
<feature type="binding site" evidence="2">
    <location>
        <position position="303"/>
    </location>
    <ligand>
        <name>Mg(2+)</name>
        <dbReference type="ChEBI" id="CHEBI:18420"/>
        <label>1</label>
    </ligand>
</feature>
<feature type="binding site" evidence="2">
    <location>
        <position position="317"/>
    </location>
    <ligand>
        <name>Mg(2+)</name>
        <dbReference type="ChEBI" id="CHEBI:18420"/>
        <label>1</label>
    </ligand>
</feature>
<feature type="binding site" evidence="2">
    <location>
        <position position="317"/>
    </location>
    <ligand>
        <name>Mg(2+)</name>
        <dbReference type="ChEBI" id="CHEBI:18420"/>
        <label>2</label>
    </ligand>
</feature>
<feature type="binding site" evidence="2">
    <location>
        <position position="319"/>
    </location>
    <ligand>
        <name>Mg(2+)</name>
        <dbReference type="ChEBI" id="CHEBI:18420"/>
        <label>2</label>
    </ligand>
</feature>
<reference key="1">
    <citation type="journal article" date="2007" name="PLoS Genet.">
        <title>Patterns and implications of gene gain and loss in the evolution of Prochlorococcus.</title>
        <authorList>
            <person name="Kettler G.C."/>
            <person name="Martiny A.C."/>
            <person name="Huang K."/>
            <person name="Zucker J."/>
            <person name="Coleman M.L."/>
            <person name="Rodrigue S."/>
            <person name="Chen F."/>
            <person name="Lapidus A."/>
            <person name="Ferriera S."/>
            <person name="Johnson J."/>
            <person name="Steglich C."/>
            <person name="Church G.M."/>
            <person name="Richardson P."/>
            <person name="Chisholm S.W."/>
        </authorList>
    </citation>
    <scope>NUCLEOTIDE SEQUENCE [LARGE SCALE GENOMIC DNA]</scope>
    <source>
        <strain>MIT 9215</strain>
    </source>
</reference>
<proteinExistence type="inferred from homology"/>
<accession>A8G6B7</accession>
<dbReference type="EC" id="6.3.2.4" evidence="2"/>
<dbReference type="EMBL" id="CP000825">
    <property type="protein sequence ID" value="ABV51148.1"/>
    <property type="molecule type" value="Genomic_DNA"/>
</dbReference>
<dbReference type="RefSeq" id="WP_012008195.1">
    <property type="nucleotide sequence ID" value="NC_009840.1"/>
</dbReference>
<dbReference type="SMR" id="A8G6B7"/>
<dbReference type="STRING" id="93060.P9215_15351"/>
<dbReference type="KEGG" id="pmh:P9215_15351"/>
<dbReference type="eggNOG" id="COG1181">
    <property type="taxonomic scope" value="Bacteria"/>
</dbReference>
<dbReference type="HOGENOM" id="CLU_039268_0_0_3"/>
<dbReference type="OrthoDB" id="9813261at2"/>
<dbReference type="UniPathway" id="UPA00219"/>
<dbReference type="Proteomes" id="UP000002014">
    <property type="component" value="Chromosome"/>
</dbReference>
<dbReference type="GO" id="GO:0005829">
    <property type="term" value="C:cytosol"/>
    <property type="evidence" value="ECO:0007669"/>
    <property type="project" value="TreeGrafter"/>
</dbReference>
<dbReference type="GO" id="GO:0005524">
    <property type="term" value="F:ATP binding"/>
    <property type="evidence" value="ECO:0007669"/>
    <property type="project" value="UniProtKB-KW"/>
</dbReference>
<dbReference type="GO" id="GO:0008716">
    <property type="term" value="F:D-alanine-D-alanine ligase activity"/>
    <property type="evidence" value="ECO:0007669"/>
    <property type="project" value="UniProtKB-UniRule"/>
</dbReference>
<dbReference type="GO" id="GO:0046872">
    <property type="term" value="F:metal ion binding"/>
    <property type="evidence" value="ECO:0007669"/>
    <property type="project" value="UniProtKB-KW"/>
</dbReference>
<dbReference type="GO" id="GO:0071555">
    <property type="term" value="P:cell wall organization"/>
    <property type="evidence" value="ECO:0007669"/>
    <property type="project" value="UniProtKB-KW"/>
</dbReference>
<dbReference type="GO" id="GO:0009252">
    <property type="term" value="P:peptidoglycan biosynthetic process"/>
    <property type="evidence" value="ECO:0007669"/>
    <property type="project" value="UniProtKB-UniRule"/>
</dbReference>
<dbReference type="GO" id="GO:0008360">
    <property type="term" value="P:regulation of cell shape"/>
    <property type="evidence" value="ECO:0007669"/>
    <property type="project" value="UniProtKB-KW"/>
</dbReference>
<dbReference type="FunFam" id="3.30.470.20:FF:000008">
    <property type="entry name" value="D-alanine--D-alanine ligase"/>
    <property type="match status" value="1"/>
</dbReference>
<dbReference type="Gene3D" id="3.40.50.20">
    <property type="match status" value="1"/>
</dbReference>
<dbReference type="Gene3D" id="3.30.1490.20">
    <property type="entry name" value="ATP-grasp fold, A domain"/>
    <property type="match status" value="1"/>
</dbReference>
<dbReference type="Gene3D" id="3.30.470.20">
    <property type="entry name" value="ATP-grasp fold, B domain"/>
    <property type="match status" value="1"/>
</dbReference>
<dbReference type="HAMAP" id="MF_00047">
    <property type="entry name" value="Dala_Dala_lig"/>
    <property type="match status" value="1"/>
</dbReference>
<dbReference type="InterPro" id="IPR011761">
    <property type="entry name" value="ATP-grasp"/>
</dbReference>
<dbReference type="InterPro" id="IPR013815">
    <property type="entry name" value="ATP_grasp_subdomain_1"/>
</dbReference>
<dbReference type="InterPro" id="IPR000291">
    <property type="entry name" value="D-Ala_lig_Van_CS"/>
</dbReference>
<dbReference type="InterPro" id="IPR005905">
    <property type="entry name" value="D_ala_D_ala"/>
</dbReference>
<dbReference type="InterPro" id="IPR011095">
    <property type="entry name" value="Dala_Dala_lig_C"/>
</dbReference>
<dbReference type="InterPro" id="IPR011127">
    <property type="entry name" value="Dala_Dala_lig_N"/>
</dbReference>
<dbReference type="InterPro" id="IPR016185">
    <property type="entry name" value="PreATP-grasp_dom_sf"/>
</dbReference>
<dbReference type="NCBIfam" id="TIGR01205">
    <property type="entry name" value="D_ala_D_alaTIGR"/>
    <property type="match status" value="1"/>
</dbReference>
<dbReference type="NCBIfam" id="NF002528">
    <property type="entry name" value="PRK01966.1-4"/>
    <property type="match status" value="1"/>
</dbReference>
<dbReference type="PANTHER" id="PTHR23132">
    <property type="entry name" value="D-ALANINE--D-ALANINE LIGASE"/>
    <property type="match status" value="1"/>
</dbReference>
<dbReference type="PANTHER" id="PTHR23132:SF25">
    <property type="entry name" value="D-ALANINE--D-ALANINE LIGASE A"/>
    <property type="match status" value="1"/>
</dbReference>
<dbReference type="Pfam" id="PF07478">
    <property type="entry name" value="Dala_Dala_lig_C"/>
    <property type="match status" value="1"/>
</dbReference>
<dbReference type="Pfam" id="PF01820">
    <property type="entry name" value="Dala_Dala_lig_N"/>
    <property type="match status" value="1"/>
</dbReference>
<dbReference type="PIRSF" id="PIRSF039102">
    <property type="entry name" value="Ddl/VanB"/>
    <property type="match status" value="1"/>
</dbReference>
<dbReference type="SUPFAM" id="SSF56059">
    <property type="entry name" value="Glutathione synthetase ATP-binding domain-like"/>
    <property type="match status" value="1"/>
</dbReference>
<dbReference type="SUPFAM" id="SSF52440">
    <property type="entry name" value="PreATP-grasp domain"/>
    <property type="match status" value="1"/>
</dbReference>
<dbReference type="PROSITE" id="PS50975">
    <property type="entry name" value="ATP_GRASP"/>
    <property type="match status" value="1"/>
</dbReference>
<dbReference type="PROSITE" id="PS00843">
    <property type="entry name" value="DALA_DALA_LIGASE_1"/>
    <property type="match status" value="1"/>
</dbReference>
<dbReference type="PROSITE" id="PS00844">
    <property type="entry name" value="DALA_DALA_LIGASE_2"/>
    <property type="match status" value="1"/>
</dbReference>
<keyword id="KW-0067">ATP-binding</keyword>
<keyword id="KW-0133">Cell shape</keyword>
<keyword id="KW-0961">Cell wall biogenesis/degradation</keyword>
<keyword id="KW-0963">Cytoplasm</keyword>
<keyword id="KW-0436">Ligase</keyword>
<keyword id="KW-0460">Magnesium</keyword>
<keyword id="KW-0464">Manganese</keyword>
<keyword id="KW-0479">Metal-binding</keyword>
<keyword id="KW-0547">Nucleotide-binding</keyword>
<keyword id="KW-0573">Peptidoglycan synthesis</keyword>
<sequence length="355" mass="40389">MIGEKKKRIGLIFGGYSNEHEVSISSAKTVFQAFNSEINKKRFKVKSFYIDKYGDWLDNDLSEKILNDEIKSNNIKKQEIVNQQKINFLDGIEFQNIDVWFPLLHGLNGEDGSIHGLLQYTRKPIVGCGILGSAIGMDKIMMKTIFSNLKIPQVNYLAFQNEDLDDREVKKKVINEILKKLNFPFFVKPSNSGSSLGISKVINESEILQSLEKAQKIDSRILVEEGLEVREIECGIIGNSELLTSEIGEIKYESDWYDYDSKYYSNNKIIIPAEIDSKITKEIKKIAIQSCRALNIFGFARVDFFLEKSSNKILLNEINTIPGFTTNSMFPMLWKASGLNIEQLVAKLVDISLDL</sequence>
<protein>
    <recommendedName>
        <fullName evidence="2">D-alanine--D-alanine ligase</fullName>
        <ecNumber evidence="2">6.3.2.4</ecNumber>
    </recommendedName>
    <alternativeName>
        <fullName evidence="2">D-Ala-D-Ala ligase</fullName>
    </alternativeName>
    <alternativeName>
        <fullName evidence="2">D-alanylalanine synthetase</fullName>
    </alternativeName>
</protein>